<name>YSIG_LACLA</name>
<reference key="1">
    <citation type="journal article" date="2001" name="Genome Res.">
        <title>The complete genome sequence of the lactic acid bacterium Lactococcus lactis ssp. lactis IL1403.</title>
        <authorList>
            <person name="Bolotin A."/>
            <person name="Wincker P."/>
            <person name="Mauger S."/>
            <person name="Jaillon O."/>
            <person name="Malarme K."/>
            <person name="Weissenbach J."/>
            <person name="Ehrlich S.D."/>
            <person name="Sorokin A."/>
        </authorList>
    </citation>
    <scope>NUCLEOTIDE SEQUENCE [LARGE SCALE GENOMIC DNA]</scope>
    <source>
        <strain>IL1403</strain>
    </source>
</reference>
<feature type="chain" id="PRO_0000161364" description="UPF0213 protein YsiG">
    <location>
        <begin position="1"/>
        <end position="104"/>
    </location>
</feature>
<feature type="domain" description="GIY-YIG" evidence="1">
    <location>
        <begin position="2"/>
        <end position="79"/>
    </location>
</feature>
<keyword id="KW-1185">Reference proteome</keyword>
<evidence type="ECO:0000255" key="1">
    <source>
        <dbReference type="PROSITE-ProRule" id="PRU00977"/>
    </source>
</evidence>
<evidence type="ECO:0000305" key="2"/>
<organism>
    <name type="scientific">Lactococcus lactis subsp. lactis (strain IL1403)</name>
    <name type="common">Streptococcus lactis</name>
    <dbReference type="NCBI Taxonomy" id="272623"/>
    <lineage>
        <taxon>Bacteria</taxon>
        <taxon>Bacillati</taxon>
        <taxon>Bacillota</taxon>
        <taxon>Bacilli</taxon>
        <taxon>Lactobacillales</taxon>
        <taxon>Streptococcaceae</taxon>
        <taxon>Lactococcus</taxon>
    </lineage>
</organism>
<comment type="similarity">
    <text evidence="2">Belongs to the UPF0213 family.</text>
</comment>
<accession>Q9CEL6</accession>
<sequence length="104" mass="12394">MNQYFTYILQCSDKTLYCGYTTDLEKRLATHNSGKGAKYTKTRLPVKLLASVDFDNKNDAMSCEWWFKHKLVRKQKLSLIKNDLIKEKFIEYLELKQKKNIHLK</sequence>
<proteinExistence type="inferred from homology"/>
<dbReference type="EMBL" id="AE005176">
    <property type="protein sequence ID" value="AAK05919.1"/>
    <property type="molecule type" value="Genomic_DNA"/>
</dbReference>
<dbReference type="PIR" id="E86852">
    <property type="entry name" value="E86852"/>
</dbReference>
<dbReference type="RefSeq" id="NP_267978.1">
    <property type="nucleotide sequence ID" value="NC_002662.1"/>
</dbReference>
<dbReference type="RefSeq" id="WP_010906152.1">
    <property type="nucleotide sequence ID" value="NC_002662.1"/>
</dbReference>
<dbReference type="SMR" id="Q9CEL6"/>
<dbReference type="PaxDb" id="272623-L1889726"/>
<dbReference type="EnsemblBacteria" id="AAK05919">
    <property type="protein sequence ID" value="AAK05919"/>
    <property type="gene ID" value="L1889726"/>
</dbReference>
<dbReference type="KEGG" id="lla:L1889726"/>
<dbReference type="PATRIC" id="fig|272623.7.peg.1951"/>
<dbReference type="eggNOG" id="COG2827">
    <property type="taxonomic scope" value="Bacteria"/>
</dbReference>
<dbReference type="HOGENOM" id="CLU_135650_0_3_9"/>
<dbReference type="OrthoDB" id="9807770at2"/>
<dbReference type="Proteomes" id="UP000002196">
    <property type="component" value="Chromosome"/>
</dbReference>
<dbReference type="CDD" id="cd10456">
    <property type="entry name" value="GIY-YIG_UPF0213"/>
    <property type="match status" value="1"/>
</dbReference>
<dbReference type="Gene3D" id="3.40.1440.10">
    <property type="entry name" value="GIY-YIG endonuclease"/>
    <property type="match status" value="1"/>
</dbReference>
<dbReference type="InterPro" id="IPR000305">
    <property type="entry name" value="GIY-YIG_endonuc"/>
</dbReference>
<dbReference type="InterPro" id="IPR035901">
    <property type="entry name" value="GIY-YIG_endonuc_sf"/>
</dbReference>
<dbReference type="InterPro" id="IPR050190">
    <property type="entry name" value="UPF0213_domain"/>
</dbReference>
<dbReference type="PANTHER" id="PTHR34477">
    <property type="entry name" value="UPF0213 PROTEIN YHBQ"/>
    <property type="match status" value="1"/>
</dbReference>
<dbReference type="PANTHER" id="PTHR34477:SF1">
    <property type="entry name" value="UPF0213 PROTEIN YHBQ"/>
    <property type="match status" value="1"/>
</dbReference>
<dbReference type="Pfam" id="PF01541">
    <property type="entry name" value="GIY-YIG"/>
    <property type="match status" value="1"/>
</dbReference>
<dbReference type="SUPFAM" id="SSF82771">
    <property type="entry name" value="GIY-YIG endonuclease"/>
    <property type="match status" value="1"/>
</dbReference>
<dbReference type="PROSITE" id="PS50164">
    <property type="entry name" value="GIY_YIG"/>
    <property type="match status" value="1"/>
</dbReference>
<gene>
    <name type="primary">ysiG</name>
    <name type="ordered locus">LL1821</name>
    <name type="ORF">L1889726</name>
</gene>
<protein>
    <recommendedName>
        <fullName>UPF0213 protein YsiG</fullName>
    </recommendedName>
</protein>